<reference evidence="3" key="1">
    <citation type="journal article" date="2009" name="J. Venom. Anim. Toxins Incl. Trop. Dis.">
        <title>Identification of bradykinin-related peptides from Phyllomedusa nordestina skin secretion using electrospray ionization tandem mass spectrometry after a single-step liquid chromatography.</title>
        <authorList>
            <person name="Conceicao K."/>
            <person name="Bruni F.M."/>
            <person name="Sciano J.M."/>
            <person name="Konno K."/>
            <person name="Melo R.L."/>
            <person name="Antoniazzi M.M."/>
            <person name="Jared C."/>
            <person name="Lopes-Ferreira M."/>
            <person name="Pimenta D.C."/>
        </authorList>
    </citation>
    <scope>PROTEIN SEQUENCE</scope>
    <scope>FUNCTION</scope>
    <scope>SUBCELLULAR LOCATION</scope>
    <scope>TISSUE SPECIFICITY</scope>
    <scope>MASS SPECTROMETRY</scope>
    <scope>AMIDATION AT LEU-6</scope>
    <source>
        <tissue evidence="1">Skin secretion</tissue>
    </source>
</reference>
<evidence type="ECO:0000269" key="1">
    <source ref="1"/>
</evidence>
<evidence type="ECO:0000303" key="2">
    <source ref="1"/>
</evidence>
<evidence type="ECO:0000305" key="3"/>
<dbReference type="GO" id="GO:0005576">
    <property type="term" value="C:extracellular region"/>
    <property type="evidence" value="ECO:0007669"/>
    <property type="project" value="UniProtKB-SubCell"/>
</dbReference>
<dbReference type="GO" id="GO:0090729">
    <property type="term" value="F:toxin activity"/>
    <property type="evidence" value="ECO:0007669"/>
    <property type="project" value="UniProtKB-KW"/>
</dbReference>
<dbReference type="GO" id="GO:0006952">
    <property type="term" value="P:defense response"/>
    <property type="evidence" value="ECO:0007669"/>
    <property type="project" value="UniProtKB-KW"/>
</dbReference>
<dbReference type="GO" id="GO:0042311">
    <property type="term" value="P:vasodilation"/>
    <property type="evidence" value="ECO:0007669"/>
    <property type="project" value="UniProtKB-KW"/>
</dbReference>
<feature type="peptide" id="PRO_0000391417" description="Bradykinin-related peptide Pnor-3" evidence="1">
    <location>
        <begin position="1"/>
        <end position="6"/>
    </location>
</feature>
<feature type="modified residue" description="Leucine amide" evidence="1">
    <location>
        <position position="6"/>
    </location>
</feature>
<protein>
    <recommendedName>
        <fullName evidence="2">Bradykinin-related peptide Pnor-3</fullName>
    </recommendedName>
</protein>
<keyword id="KW-0027">Amidation</keyword>
<keyword id="KW-0878">Amphibian defense peptide</keyword>
<keyword id="KW-1222">Bradykinin receptor impairing toxin</keyword>
<keyword id="KW-0903">Direct protein sequencing</keyword>
<keyword id="KW-1213">G-protein coupled receptor impairing toxin</keyword>
<keyword id="KW-0964">Secreted</keyword>
<keyword id="KW-0800">Toxin</keyword>
<keyword id="KW-0838">Vasoactive</keyword>
<keyword id="KW-0840">Vasodilator</keyword>
<name>BRK3_PITNO</name>
<comment type="function">
    <text evidence="1">Vasodilator. May target bradykinin receptors (BDKRB).</text>
</comment>
<comment type="subcellular location">
    <subcellularLocation>
        <location evidence="1">Secreted</location>
    </subcellularLocation>
</comment>
<comment type="tissue specificity">
    <text evidence="1">Expressed by the skin glands.</text>
</comment>
<comment type="mass spectrometry"/>
<comment type="similarity">
    <text evidence="3">Belongs to the bradykinin-related peptide family.</text>
</comment>
<organism>
    <name type="scientific">Pithecopus nordestinus</name>
    <name type="common">Northeastern Brazilian leaf frog</name>
    <name type="synonym">Phyllomedusa nordestina</name>
    <dbReference type="NCBI Taxonomy" id="2034992"/>
    <lineage>
        <taxon>Eukaryota</taxon>
        <taxon>Metazoa</taxon>
        <taxon>Chordata</taxon>
        <taxon>Craniata</taxon>
        <taxon>Vertebrata</taxon>
        <taxon>Euteleostomi</taxon>
        <taxon>Amphibia</taxon>
        <taxon>Batrachia</taxon>
        <taxon>Anura</taxon>
        <taxon>Neobatrachia</taxon>
        <taxon>Hyloidea</taxon>
        <taxon>Hylidae</taxon>
        <taxon>Phyllomedusinae</taxon>
        <taxon>Pithecopus</taxon>
    </lineage>
</organism>
<sequence>KPLWRL</sequence>
<accession>P86428</accession>
<proteinExistence type="evidence at protein level"/>